<reference key="1">
    <citation type="journal article" date="1998" name="Science">
        <title>Genome sequence of the nematode C. elegans: a platform for investigating biology.</title>
        <authorList>
            <consortium name="The C. elegans sequencing consortium"/>
        </authorList>
    </citation>
    <scope>NUCLEOTIDE SEQUENCE [LARGE SCALE GENOMIC DNA]</scope>
    <source>
        <strain>Bristol N2</strain>
    </source>
</reference>
<protein>
    <recommendedName>
        <fullName evidence="4">Glucosamine-6-phosphate deaminase</fullName>
        <shortName>GNPDA</shortName>
        <shortName>GlcN6P deaminase</shortName>
        <ecNumber evidence="3">3.5.99.6</ecNumber>
    </recommendedName>
    <alternativeName>
        <fullName evidence="6">Glucosamine-6-phosphate isomerase</fullName>
        <shortName evidence="4">GNPI</shortName>
    </alternativeName>
</protein>
<feature type="chain" id="PRO_0000160126" description="Glucosamine-6-phosphate deaminase">
    <location>
        <begin position="1"/>
        <end position="267"/>
    </location>
</feature>
<feature type="active site" description="Proton acceptor; for enolization step" evidence="1">
    <location>
        <position position="71"/>
    </location>
</feature>
<feature type="active site" description="For ring-opening step" evidence="1">
    <location>
        <position position="140"/>
    </location>
</feature>
<feature type="active site" description="Proton acceptor; for ring-opening step" evidence="1">
    <location>
        <position position="142"/>
    </location>
</feature>
<feature type="active site" description="For ring-opening step" evidence="1">
    <location>
        <position position="147"/>
    </location>
</feature>
<sequence length="267" mass="29913">MKLIIEENADKVAEFAARYVVTKINEATENGKYLVLGLPTGSTPLGMYKKLIEFYNAGVISFEKVKTFNMDEYVDLPRDHTESYHSFMFDNFFRHIDINPANIHILDGNTSDHEKECEEYERKIKESGGIDLFVGGIGPDGHIAFNEPGSSLASRTRIKTLNEDTIQANARFFGGDITKVPTQALTVGVQTVMDAREVMILITGSHKALALHQAIECGISHMCTVSAMQMHRCATFIADEDATLELKVKTVKYFKGLMNHHRSLVMF</sequence>
<gene>
    <name evidence="6" type="ORF">T03F6.3</name>
</gene>
<name>GNPI_CAEEL</name>
<organism evidence="5">
    <name type="scientific">Caenorhabditis elegans</name>
    <dbReference type="NCBI Taxonomy" id="6239"/>
    <lineage>
        <taxon>Eukaryota</taxon>
        <taxon>Metazoa</taxon>
        <taxon>Ecdysozoa</taxon>
        <taxon>Nematoda</taxon>
        <taxon>Chromadorea</taxon>
        <taxon>Rhabditida</taxon>
        <taxon>Rhabditina</taxon>
        <taxon>Rhabditomorpha</taxon>
        <taxon>Rhabditoidea</taxon>
        <taxon>Rhabditidae</taxon>
        <taxon>Peloderinae</taxon>
        <taxon>Caenorhabditis</taxon>
    </lineage>
</organism>
<keyword id="KW-0119">Carbohydrate metabolism</keyword>
<keyword id="KW-0963">Cytoplasm</keyword>
<keyword id="KW-0378">Hydrolase</keyword>
<keyword id="KW-1185">Reference proteome</keyword>
<accession>Q9XVJ2</accession>
<evidence type="ECO:0000250" key="1"/>
<evidence type="ECO:0000250" key="2">
    <source>
        <dbReference type="UniProtKB" id="O88958"/>
    </source>
</evidence>
<evidence type="ECO:0000250" key="3">
    <source>
        <dbReference type="UniProtKB" id="P46926"/>
    </source>
</evidence>
<evidence type="ECO:0000305" key="4"/>
<evidence type="ECO:0000312" key="5">
    <source>
        <dbReference type="Proteomes" id="UP000001940"/>
    </source>
</evidence>
<evidence type="ECO:0000312" key="6">
    <source>
        <dbReference type="WormBase" id="T03F6.3"/>
    </source>
</evidence>
<comment type="function">
    <text evidence="3">Catalyzes the reversible conversion of alpha-D-glucosamine 6-phosphate (GlcN-6P) into beta-D-fructose 6-phosphate (Fru-6P) and ammonium ion, a regulatory reaction step in de novo uridine diphosphate-N-acetyl-alpha-D-glucosamine (UDP-GlcNAc) biosynthesis via hexosamine pathway.</text>
</comment>
<comment type="catalytic activity">
    <reaction evidence="3">
        <text>alpha-D-glucosamine 6-phosphate + H2O = beta-D-fructose 6-phosphate + NH4(+)</text>
        <dbReference type="Rhea" id="RHEA:12172"/>
        <dbReference type="ChEBI" id="CHEBI:15377"/>
        <dbReference type="ChEBI" id="CHEBI:28938"/>
        <dbReference type="ChEBI" id="CHEBI:57634"/>
        <dbReference type="ChEBI" id="CHEBI:75989"/>
        <dbReference type="EC" id="3.5.99.6"/>
    </reaction>
</comment>
<comment type="pathway">
    <text evidence="3">Nucleotide-sugar biosynthesis; UDP-N-acetyl-alpha-D-glucosamine biosynthesis; alpha-D-glucosamine 6-phosphate from D-fructose 6-phosphate: step 1/1.</text>
</comment>
<comment type="subunit">
    <text evidence="3">Homohexamer.</text>
</comment>
<comment type="subcellular location">
    <subcellularLocation>
        <location evidence="2">Cytoplasm</location>
    </subcellularLocation>
</comment>
<comment type="similarity">
    <text evidence="4">Belongs to the glucosamine/galactosamine-6-phosphate isomerase family.</text>
</comment>
<dbReference type="EC" id="3.5.99.6" evidence="3"/>
<dbReference type="EMBL" id="Z81113">
    <property type="protein sequence ID" value="CAB03280.1"/>
    <property type="molecule type" value="Genomic_DNA"/>
</dbReference>
<dbReference type="PIR" id="T24397">
    <property type="entry name" value="T24397"/>
</dbReference>
<dbReference type="RefSeq" id="NP_499758.1">
    <property type="nucleotide sequence ID" value="NM_067357.5"/>
</dbReference>
<dbReference type="SMR" id="Q9XVJ2"/>
<dbReference type="BioGRID" id="41929">
    <property type="interactions" value="4"/>
</dbReference>
<dbReference type="DIP" id="DIP-25269N"/>
<dbReference type="FunCoup" id="Q9XVJ2">
    <property type="interactions" value="2276"/>
</dbReference>
<dbReference type="IntAct" id="Q9XVJ2">
    <property type="interactions" value="1"/>
</dbReference>
<dbReference type="STRING" id="6239.T03F6.3.1"/>
<dbReference type="PaxDb" id="6239-T03F6.3"/>
<dbReference type="PeptideAtlas" id="Q9XVJ2"/>
<dbReference type="EnsemblMetazoa" id="T03F6.3.1">
    <property type="protein sequence ID" value="T03F6.3.1"/>
    <property type="gene ID" value="WBGene00011399"/>
</dbReference>
<dbReference type="GeneID" id="176760"/>
<dbReference type="KEGG" id="cel:CELE_T03F6.3"/>
<dbReference type="UCSC" id="T03F6.3">
    <property type="organism name" value="c. elegans"/>
</dbReference>
<dbReference type="AGR" id="WB:WBGene00011399"/>
<dbReference type="CTD" id="176760"/>
<dbReference type="WormBase" id="T03F6.3">
    <property type="protein sequence ID" value="CE16337"/>
    <property type="gene ID" value="WBGene00011399"/>
</dbReference>
<dbReference type="eggNOG" id="KOG3148">
    <property type="taxonomic scope" value="Eukaryota"/>
</dbReference>
<dbReference type="GeneTree" id="ENSGT00390000014316"/>
<dbReference type="HOGENOM" id="CLU_049611_0_1_1"/>
<dbReference type="InParanoid" id="Q9XVJ2"/>
<dbReference type="OMA" id="INHMWTL"/>
<dbReference type="OrthoDB" id="7663298at2759"/>
<dbReference type="PhylomeDB" id="Q9XVJ2"/>
<dbReference type="Reactome" id="R-CEL-70171">
    <property type="pathway name" value="Glycolysis"/>
</dbReference>
<dbReference type="UniPathway" id="UPA00113">
    <property type="reaction ID" value="UER00528"/>
</dbReference>
<dbReference type="PRO" id="PR:Q9XVJ2"/>
<dbReference type="Proteomes" id="UP000001940">
    <property type="component" value="Chromosome III"/>
</dbReference>
<dbReference type="Bgee" id="WBGene00011399">
    <property type="expression patterns" value="Expressed in germ line (C elegans) and 4 other cell types or tissues"/>
</dbReference>
<dbReference type="GO" id="GO:0005737">
    <property type="term" value="C:cytoplasm"/>
    <property type="evidence" value="ECO:0000318"/>
    <property type="project" value="GO_Central"/>
</dbReference>
<dbReference type="GO" id="GO:0004342">
    <property type="term" value="F:glucosamine-6-phosphate deaminase activity"/>
    <property type="evidence" value="ECO:0000318"/>
    <property type="project" value="GO_Central"/>
</dbReference>
<dbReference type="GO" id="GO:0042802">
    <property type="term" value="F:identical protein binding"/>
    <property type="evidence" value="ECO:0000318"/>
    <property type="project" value="GO_Central"/>
</dbReference>
<dbReference type="GO" id="GO:0005975">
    <property type="term" value="P:carbohydrate metabolic process"/>
    <property type="evidence" value="ECO:0007669"/>
    <property type="project" value="InterPro"/>
</dbReference>
<dbReference type="GO" id="GO:0006043">
    <property type="term" value="P:glucosamine catabolic process"/>
    <property type="evidence" value="ECO:0000318"/>
    <property type="project" value="GO_Central"/>
</dbReference>
<dbReference type="GO" id="GO:0006046">
    <property type="term" value="P:N-acetylglucosamine catabolic process"/>
    <property type="evidence" value="ECO:0000318"/>
    <property type="project" value="GO_Central"/>
</dbReference>
<dbReference type="GO" id="GO:0019262">
    <property type="term" value="P:N-acetylneuraminate catabolic process"/>
    <property type="evidence" value="ECO:0000318"/>
    <property type="project" value="GO_Central"/>
</dbReference>
<dbReference type="CDD" id="cd01399">
    <property type="entry name" value="GlcN6P_deaminase"/>
    <property type="match status" value="1"/>
</dbReference>
<dbReference type="FunFam" id="3.40.50.1360:FF:000002">
    <property type="entry name" value="Glucosamine-6-phosphate deaminase"/>
    <property type="match status" value="1"/>
</dbReference>
<dbReference type="Gene3D" id="3.40.50.1360">
    <property type="match status" value="1"/>
</dbReference>
<dbReference type="HAMAP" id="MF_01241">
    <property type="entry name" value="GlcN6P_deamin"/>
    <property type="match status" value="1"/>
</dbReference>
<dbReference type="InterPro" id="IPR006148">
    <property type="entry name" value="Glc/Gal-6P_isomerase"/>
</dbReference>
<dbReference type="InterPro" id="IPR004547">
    <property type="entry name" value="Glucosamine6P_isomerase"/>
</dbReference>
<dbReference type="InterPro" id="IPR018321">
    <property type="entry name" value="Glucosamine6P_isomerase_CS"/>
</dbReference>
<dbReference type="InterPro" id="IPR037171">
    <property type="entry name" value="NagB/RpiA_transferase-like"/>
</dbReference>
<dbReference type="NCBIfam" id="TIGR00502">
    <property type="entry name" value="nagB"/>
    <property type="match status" value="1"/>
</dbReference>
<dbReference type="PANTHER" id="PTHR11280">
    <property type="entry name" value="GLUCOSAMINE-6-PHOSPHATE ISOMERASE"/>
    <property type="match status" value="1"/>
</dbReference>
<dbReference type="PANTHER" id="PTHR11280:SF5">
    <property type="entry name" value="GLUCOSAMINE-6-PHOSPHATE ISOMERASE"/>
    <property type="match status" value="1"/>
</dbReference>
<dbReference type="Pfam" id="PF01182">
    <property type="entry name" value="Glucosamine_iso"/>
    <property type="match status" value="1"/>
</dbReference>
<dbReference type="SUPFAM" id="SSF100950">
    <property type="entry name" value="NagB/RpiA/CoA transferase-like"/>
    <property type="match status" value="1"/>
</dbReference>
<dbReference type="PROSITE" id="PS01161">
    <property type="entry name" value="GLC_GALNAC_ISOMERASE"/>
    <property type="match status" value="1"/>
</dbReference>
<proteinExistence type="inferred from homology"/>